<keyword id="KW-0963">Cytoplasm</keyword>
<keyword id="KW-0456">Lyase</keyword>
<keyword id="KW-0816">Tricarboxylic acid cycle</keyword>
<protein>
    <recommendedName>
        <fullName evidence="1">Fumarate hydratase class II</fullName>
        <shortName evidence="1">Fumarase C</shortName>
        <ecNumber evidence="1">4.2.1.2</ecNumber>
    </recommendedName>
    <alternativeName>
        <fullName evidence="1">Aerobic fumarase</fullName>
    </alternativeName>
    <alternativeName>
        <fullName evidence="1">Iron-independent fumarase</fullName>
    </alternativeName>
</protein>
<name>FUMC_CHLMU</name>
<reference key="1">
    <citation type="journal article" date="2000" name="Nucleic Acids Res.">
        <title>Genome sequences of Chlamydia trachomatis MoPn and Chlamydia pneumoniae AR39.</title>
        <authorList>
            <person name="Read T.D."/>
            <person name="Brunham R.C."/>
            <person name="Shen C."/>
            <person name="Gill S.R."/>
            <person name="Heidelberg J.F."/>
            <person name="White O."/>
            <person name="Hickey E.K."/>
            <person name="Peterson J.D."/>
            <person name="Utterback T.R."/>
            <person name="Berry K.J."/>
            <person name="Bass S."/>
            <person name="Linher K.D."/>
            <person name="Weidman J.F."/>
            <person name="Khouri H.M."/>
            <person name="Craven B."/>
            <person name="Bowman C."/>
            <person name="Dodson R.J."/>
            <person name="Gwinn M.L."/>
            <person name="Nelson W.C."/>
            <person name="DeBoy R.T."/>
            <person name="Kolonay J.F."/>
            <person name="McClarty G."/>
            <person name="Salzberg S.L."/>
            <person name="Eisen J.A."/>
            <person name="Fraser C.M."/>
        </authorList>
    </citation>
    <scope>NUCLEOTIDE SEQUENCE [LARGE SCALE GENOMIC DNA]</scope>
    <source>
        <strain>MoPn / Nigg</strain>
    </source>
</reference>
<comment type="function">
    <text evidence="1">Involved in the TCA cycle. Catalyzes the stereospecific interconversion of fumarate to L-malate.</text>
</comment>
<comment type="catalytic activity">
    <reaction evidence="1">
        <text>(S)-malate = fumarate + H2O</text>
        <dbReference type="Rhea" id="RHEA:12460"/>
        <dbReference type="ChEBI" id="CHEBI:15377"/>
        <dbReference type="ChEBI" id="CHEBI:15589"/>
        <dbReference type="ChEBI" id="CHEBI:29806"/>
        <dbReference type="EC" id="4.2.1.2"/>
    </reaction>
</comment>
<comment type="pathway">
    <text evidence="1">Carbohydrate metabolism; tricarboxylic acid cycle; (S)-malate from fumarate: step 1/1.</text>
</comment>
<comment type="subunit">
    <text evidence="1">Homotetramer.</text>
</comment>
<comment type="subcellular location">
    <subcellularLocation>
        <location evidence="1">Cytoplasm</location>
    </subcellularLocation>
</comment>
<comment type="miscellaneous">
    <text evidence="1">There are 2 substrate-binding sites: the catalytic A site, and the non-catalytic B site that may play a role in the transfer of substrate or product between the active site and the solvent. Alternatively, the B site may bind allosteric effectors.</text>
</comment>
<comment type="similarity">
    <text evidence="1">Belongs to the class-II fumarase/aspartase family. Fumarase subfamily.</text>
</comment>
<proteinExistence type="inferred from homology"/>
<sequence>MRQENDSLGIVMVPEDKLFGAQTGRSKNFFSYGKELMPIEVIQALVKIKKCAAKANGDLQCLDAKRRDMIVAASDEILSGGLEEHFPLKVWQTGSGTQSNMNVNEVIANLAIKRHGGELGSKNPVHPNDHVNKSQSSNDVFPTAMHIAAVQSIKGSLIPALEHLQKNLDAKALEFSRDIKIGRTHLMDAVPMTLGQEFSGYSHQLRSCLERIGFSLTHLYELAIGGTAVGTGLNVPEGFVDKVIYYLRQETGEPFIPASNYFAALSNHDALVQAHGSLAVLACSLIKIATDLSFLGSGPRCGLGEIFFPENEPGSSIMPGKINPTQSEALQMVCSQVIGNNQSVIFSGTKGNFELNVMKPVIIYDFLQSVNLLSGAMRSFADYFVSGLKVNRGQLQQNVERSLMLVTALAPVLGYDKCSKIALKAFHENLSLKEACVSLGFLSEQEFDTHVVPGLMLGKRERE</sequence>
<accession>Q9PL64</accession>
<dbReference type="EC" id="4.2.1.2" evidence="1"/>
<dbReference type="EMBL" id="AE002160">
    <property type="protein sequence ID" value="AAF39114.1"/>
    <property type="molecule type" value="Genomic_DNA"/>
</dbReference>
<dbReference type="PIR" id="B81725">
    <property type="entry name" value="B81725"/>
</dbReference>
<dbReference type="RefSeq" id="WP_010229926.1">
    <property type="nucleotide sequence ID" value="NZ_CP063055.1"/>
</dbReference>
<dbReference type="SMR" id="Q9PL64"/>
<dbReference type="GeneID" id="1246413"/>
<dbReference type="KEGG" id="cmu:TC_0244"/>
<dbReference type="eggNOG" id="COG0114">
    <property type="taxonomic scope" value="Bacteria"/>
</dbReference>
<dbReference type="HOGENOM" id="CLU_021594_4_1_0"/>
<dbReference type="OrthoDB" id="9802809at2"/>
<dbReference type="UniPathway" id="UPA00223">
    <property type="reaction ID" value="UER01007"/>
</dbReference>
<dbReference type="Proteomes" id="UP000000800">
    <property type="component" value="Chromosome"/>
</dbReference>
<dbReference type="GO" id="GO:0005737">
    <property type="term" value="C:cytoplasm"/>
    <property type="evidence" value="ECO:0007669"/>
    <property type="project" value="UniProtKB-SubCell"/>
</dbReference>
<dbReference type="GO" id="GO:0004333">
    <property type="term" value="F:fumarate hydratase activity"/>
    <property type="evidence" value="ECO:0007669"/>
    <property type="project" value="UniProtKB-UniRule"/>
</dbReference>
<dbReference type="GO" id="GO:0006106">
    <property type="term" value="P:fumarate metabolic process"/>
    <property type="evidence" value="ECO:0007669"/>
    <property type="project" value="InterPro"/>
</dbReference>
<dbReference type="GO" id="GO:0006108">
    <property type="term" value="P:malate metabolic process"/>
    <property type="evidence" value="ECO:0007669"/>
    <property type="project" value="TreeGrafter"/>
</dbReference>
<dbReference type="GO" id="GO:0006099">
    <property type="term" value="P:tricarboxylic acid cycle"/>
    <property type="evidence" value="ECO:0007669"/>
    <property type="project" value="UniProtKB-UniRule"/>
</dbReference>
<dbReference type="CDD" id="cd01362">
    <property type="entry name" value="Fumarase_classII"/>
    <property type="match status" value="1"/>
</dbReference>
<dbReference type="FunFam" id="1.10.40.30:FF:000002">
    <property type="entry name" value="Fumarate hydratase class II"/>
    <property type="match status" value="1"/>
</dbReference>
<dbReference type="FunFam" id="1.10.275.10:FF:000001">
    <property type="entry name" value="Fumarate hydratase, mitochondrial"/>
    <property type="match status" value="1"/>
</dbReference>
<dbReference type="FunFam" id="1.20.200.10:FF:000001">
    <property type="entry name" value="Fumarate hydratase, mitochondrial"/>
    <property type="match status" value="1"/>
</dbReference>
<dbReference type="Gene3D" id="1.10.40.30">
    <property type="entry name" value="Fumarase/aspartase (C-terminal domain)"/>
    <property type="match status" value="1"/>
</dbReference>
<dbReference type="Gene3D" id="1.20.200.10">
    <property type="entry name" value="Fumarase/aspartase (Central domain)"/>
    <property type="match status" value="1"/>
</dbReference>
<dbReference type="Gene3D" id="1.10.275.10">
    <property type="entry name" value="Fumarase/aspartase (N-terminal domain)"/>
    <property type="match status" value="1"/>
</dbReference>
<dbReference type="HAMAP" id="MF_00743">
    <property type="entry name" value="FumaraseC"/>
    <property type="match status" value="1"/>
</dbReference>
<dbReference type="InterPro" id="IPR005677">
    <property type="entry name" value="Fum_hydII"/>
</dbReference>
<dbReference type="InterPro" id="IPR024083">
    <property type="entry name" value="Fumarase/histidase_N"/>
</dbReference>
<dbReference type="InterPro" id="IPR018951">
    <property type="entry name" value="Fumarase_C_C"/>
</dbReference>
<dbReference type="InterPro" id="IPR020557">
    <property type="entry name" value="Fumarate_lyase_CS"/>
</dbReference>
<dbReference type="InterPro" id="IPR000362">
    <property type="entry name" value="Fumarate_lyase_fam"/>
</dbReference>
<dbReference type="InterPro" id="IPR022761">
    <property type="entry name" value="Fumarate_lyase_N"/>
</dbReference>
<dbReference type="InterPro" id="IPR008948">
    <property type="entry name" value="L-Aspartase-like"/>
</dbReference>
<dbReference type="NCBIfam" id="TIGR00979">
    <property type="entry name" value="fumC_II"/>
    <property type="match status" value="1"/>
</dbReference>
<dbReference type="PANTHER" id="PTHR11444">
    <property type="entry name" value="ASPARTATEAMMONIA/ARGININOSUCCINATE/ADENYLOSUCCINATE LYASE"/>
    <property type="match status" value="1"/>
</dbReference>
<dbReference type="PANTHER" id="PTHR11444:SF1">
    <property type="entry name" value="FUMARATE HYDRATASE, MITOCHONDRIAL"/>
    <property type="match status" value="1"/>
</dbReference>
<dbReference type="Pfam" id="PF10415">
    <property type="entry name" value="FumaraseC_C"/>
    <property type="match status" value="1"/>
</dbReference>
<dbReference type="Pfam" id="PF00206">
    <property type="entry name" value="Lyase_1"/>
    <property type="match status" value="1"/>
</dbReference>
<dbReference type="PRINTS" id="PR00149">
    <property type="entry name" value="FUMRATELYASE"/>
</dbReference>
<dbReference type="SUPFAM" id="SSF48557">
    <property type="entry name" value="L-aspartase-like"/>
    <property type="match status" value="1"/>
</dbReference>
<dbReference type="PROSITE" id="PS00163">
    <property type="entry name" value="FUMARATE_LYASES"/>
    <property type="match status" value="1"/>
</dbReference>
<organism>
    <name type="scientific">Chlamydia muridarum (strain MoPn / Nigg)</name>
    <dbReference type="NCBI Taxonomy" id="243161"/>
    <lineage>
        <taxon>Bacteria</taxon>
        <taxon>Pseudomonadati</taxon>
        <taxon>Chlamydiota</taxon>
        <taxon>Chlamydiia</taxon>
        <taxon>Chlamydiales</taxon>
        <taxon>Chlamydiaceae</taxon>
        <taxon>Chlamydia/Chlamydophila group</taxon>
        <taxon>Chlamydia</taxon>
    </lineage>
</organism>
<feature type="chain" id="PRO_0000161267" description="Fumarate hydratase class II">
    <location>
        <begin position="1"/>
        <end position="463"/>
    </location>
</feature>
<feature type="active site" description="Proton donor/acceptor" evidence="1">
    <location>
        <position position="185"/>
    </location>
</feature>
<feature type="active site" evidence="1">
    <location>
        <position position="315"/>
    </location>
</feature>
<feature type="binding site" evidence="1">
    <location>
        <begin position="95"/>
        <end position="97"/>
    </location>
    <ligand>
        <name>substrate</name>
    </ligand>
</feature>
<feature type="binding site" description="in site B" evidence="1">
    <location>
        <begin position="126"/>
        <end position="129"/>
    </location>
    <ligand>
        <name>substrate</name>
    </ligand>
</feature>
<feature type="binding site" evidence="1">
    <location>
        <begin position="136"/>
        <end position="138"/>
    </location>
    <ligand>
        <name>substrate</name>
    </ligand>
</feature>
<feature type="binding site" evidence="1">
    <location>
        <position position="184"/>
    </location>
    <ligand>
        <name>substrate</name>
    </ligand>
</feature>
<feature type="binding site" evidence="1">
    <location>
        <position position="316"/>
    </location>
    <ligand>
        <name>substrate</name>
    </ligand>
</feature>
<feature type="binding site" evidence="1">
    <location>
        <begin position="321"/>
        <end position="323"/>
    </location>
    <ligand>
        <name>substrate</name>
    </ligand>
</feature>
<feature type="site" description="Important for catalytic activity" evidence="1">
    <location>
        <position position="328"/>
    </location>
</feature>
<gene>
    <name evidence="1" type="primary">fumC</name>
    <name type="ordered locus">TC_0244</name>
</gene>
<evidence type="ECO:0000255" key="1">
    <source>
        <dbReference type="HAMAP-Rule" id="MF_00743"/>
    </source>
</evidence>